<dbReference type="EC" id="2.7.7.6" evidence="1"/>
<dbReference type="EMBL" id="CP000025">
    <property type="protein sequence ID" value="AAW35116.1"/>
    <property type="molecule type" value="Genomic_DNA"/>
</dbReference>
<dbReference type="RefSeq" id="WP_002867604.1">
    <property type="nucleotide sequence ID" value="NC_003912.7"/>
</dbReference>
<dbReference type="SMR" id="Q5HVY8"/>
<dbReference type="KEGG" id="cjr:CJE0529"/>
<dbReference type="HOGENOM" id="CLU_000524_3_1_7"/>
<dbReference type="GO" id="GO:0000428">
    <property type="term" value="C:DNA-directed RNA polymerase complex"/>
    <property type="evidence" value="ECO:0007669"/>
    <property type="project" value="UniProtKB-KW"/>
</dbReference>
<dbReference type="GO" id="GO:0003677">
    <property type="term" value="F:DNA binding"/>
    <property type="evidence" value="ECO:0007669"/>
    <property type="project" value="UniProtKB-UniRule"/>
</dbReference>
<dbReference type="GO" id="GO:0003899">
    <property type="term" value="F:DNA-directed RNA polymerase activity"/>
    <property type="evidence" value="ECO:0007669"/>
    <property type="project" value="UniProtKB-UniRule"/>
</dbReference>
<dbReference type="GO" id="GO:0000287">
    <property type="term" value="F:magnesium ion binding"/>
    <property type="evidence" value="ECO:0007669"/>
    <property type="project" value="UniProtKB-UniRule"/>
</dbReference>
<dbReference type="GO" id="GO:0008270">
    <property type="term" value="F:zinc ion binding"/>
    <property type="evidence" value="ECO:0007669"/>
    <property type="project" value="UniProtKB-UniRule"/>
</dbReference>
<dbReference type="GO" id="GO:0006351">
    <property type="term" value="P:DNA-templated transcription"/>
    <property type="evidence" value="ECO:0007669"/>
    <property type="project" value="UniProtKB-UniRule"/>
</dbReference>
<dbReference type="CDD" id="cd02655">
    <property type="entry name" value="RNAP_beta'_C"/>
    <property type="match status" value="1"/>
</dbReference>
<dbReference type="CDD" id="cd01609">
    <property type="entry name" value="RNAP_beta'_N"/>
    <property type="match status" value="1"/>
</dbReference>
<dbReference type="FunFam" id="1.10.132.30:FF:000003">
    <property type="entry name" value="DNA-directed RNA polymerase subunit beta"/>
    <property type="match status" value="1"/>
</dbReference>
<dbReference type="Gene3D" id="1.10.132.30">
    <property type="match status" value="1"/>
</dbReference>
<dbReference type="Gene3D" id="1.10.150.390">
    <property type="match status" value="1"/>
</dbReference>
<dbReference type="Gene3D" id="1.10.1790.20">
    <property type="match status" value="1"/>
</dbReference>
<dbReference type="Gene3D" id="1.10.40.90">
    <property type="match status" value="1"/>
</dbReference>
<dbReference type="Gene3D" id="2.40.40.20">
    <property type="match status" value="1"/>
</dbReference>
<dbReference type="Gene3D" id="2.40.50.100">
    <property type="match status" value="3"/>
</dbReference>
<dbReference type="Gene3D" id="4.10.860.120">
    <property type="entry name" value="RNA polymerase II, clamp domain"/>
    <property type="match status" value="1"/>
</dbReference>
<dbReference type="Gene3D" id="1.10.274.100">
    <property type="entry name" value="RNA polymerase Rpb1, domain 3"/>
    <property type="match status" value="1"/>
</dbReference>
<dbReference type="HAMAP" id="MF_01322">
    <property type="entry name" value="RNApol_bact_RpoC"/>
    <property type="match status" value="1"/>
</dbReference>
<dbReference type="InterPro" id="IPR045867">
    <property type="entry name" value="DNA-dir_RpoC_beta_prime"/>
</dbReference>
<dbReference type="InterPro" id="IPR012754">
    <property type="entry name" value="DNA-dir_RpoC_beta_prime_bact"/>
</dbReference>
<dbReference type="InterPro" id="IPR000722">
    <property type="entry name" value="RNA_pol_asu"/>
</dbReference>
<dbReference type="InterPro" id="IPR006592">
    <property type="entry name" value="RNA_pol_N"/>
</dbReference>
<dbReference type="InterPro" id="IPR007080">
    <property type="entry name" value="RNA_pol_Rpb1_1"/>
</dbReference>
<dbReference type="InterPro" id="IPR007066">
    <property type="entry name" value="RNA_pol_Rpb1_3"/>
</dbReference>
<dbReference type="InterPro" id="IPR042102">
    <property type="entry name" value="RNA_pol_Rpb1_3_sf"/>
</dbReference>
<dbReference type="InterPro" id="IPR007083">
    <property type="entry name" value="RNA_pol_Rpb1_4"/>
</dbReference>
<dbReference type="InterPro" id="IPR007081">
    <property type="entry name" value="RNA_pol_Rpb1_5"/>
</dbReference>
<dbReference type="InterPro" id="IPR044893">
    <property type="entry name" value="RNA_pol_Rpb1_clamp_domain"/>
</dbReference>
<dbReference type="InterPro" id="IPR038120">
    <property type="entry name" value="Rpb1_funnel_sf"/>
</dbReference>
<dbReference type="NCBIfam" id="TIGR02386">
    <property type="entry name" value="rpoC_TIGR"/>
    <property type="match status" value="1"/>
</dbReference>
<dbReference type="PANTHER" id="PTHR19376">
    <property type="entry name" value="DNA-DIRECTED RNA POLYMERASE"/>
    <property type="match status" value="1"/>
</dbReference>
<dbReference type="PANTHER" id="PTHR19376:SF54">
    <property type="entry name" value="DNA-DIRECTED RNA POLYMERASE SUBUNIT BETA"/>
    <property type="match status" value="1"/>
</dbReference>
<dbReference type="Pfam" id="PF04997">
    <property type="entry name" value="RNA_pol_Rpb1_1"/>
    <property type="match status" value="1"/>
</dbReference>
<dbReference type="Pfam" id="PF00623">
    <property type="entry name" value="RNA_pol_Rpb1_2"/>
    <property type="match status" value="2"/>
</dbReference>
<dbReference type="Pfam" id="PF04983">
    <property type="entry name" value="RNA_pol_Rpb1_3"/>
    <property type="match status" value="1"/>
</dbReference>
<dbReference type="Pfam" id="PF05000">
    <property type="entry name" value="RNA_pol_Rpb1_4"/>
    <property type="match status" value="1"/>
</dbReference>
<dbReference type="Pfam" id="PF04998">
    <property type="entry name" value="RNA_pol_Rpb1_5"/>
    <property type="match status" value="1"/>
</dbReference>
<dbReference type="SMART" id="SM00663">
    <property type="entry name" value="RPOLA_N"/>
    <property type="match status" value="1"/>
</dbReference>
<dbReference type="SUPFAM" id="SSF64484">
    <property type="entry name" value="beta and beta-prime subunits of DNA dependent RNA-polymerase"/>
    <property type="match status" value="1"/>
</dbReference>
<reference key="1">
    <citation type="journal article" date="2005" name="PLoS Biol.">
        <title>Major structural differences and novel potential virulence mechanisms from the genomes of multiple Campylobacter species.</title>
        <authorList>
            <person name="Fouts D.E."/>
            <person name="Mongodin E.F."/>
            <person name="Mandrell R.E."/>
            <person name="Miller W.G."/>
            <person name="Rasko D.A."/>
            <person name="Ravel J."/>
            <person name="Brinkac L.M."/>
            <person name="DeBoy R.T."/>
            <person name="Parker C.T."/>
            <person name="Daugherty S.C."/>
            <person name="Dodson R.J."/>
            <person name="Durkin A.S."/>
            <person name="Madupu R."/>
            <person name="Sullivan S.A."/>
            <person name="Shetty J.U."/>
            <person name="Ayodeji M.A."/>
            <person name="Shvartsbeyn A."/>
            <person name="Schatz M.C."/>
            <person name="Badger J.H."/>
            <person name="Fraser C.M."/>
            <person name="Nelson K.E."/>
        </authorList>
    </citation>
    <scope>NUCLEOTIDE SEQUENCE [LARGE SCALE GENOMIC DNA]</scope>
    <source>
        <strain>RM1221</strain>
    </source>
</reference>
<evidence type="ECO:0000255" key="1">
    <source>
        <dbReference type="HAMAP-Rule" id="MF_01322"/>
    </source>
</evidence>
<keyword id="KW-0240">DNA-directed RNA polymerase</keyword>
<keyword id="KW-0460">Magnesium</keyword>
<keyword id="KW-0479">Metal-binding</keyword>
<keyword id="KW-0548">Nucleotidyltransferase</keyword>
<keyword id="KW-0804">Transcription</keyword>
<keyword id="KW-0808">Transferase</keyword>
<keyword id="KW-0862">Zinc</keyword>
<protein>
    <recommendedName>
        <fullName evidence="1">DNA-directed RNA polymerase subunit beta'</fullName>
        <shortName evidence="1">RNAP subunit beta'</shortName>
        <ecNumber evidence="1">2.7.7.6</ecNumber>
    </recommendedName>
    <alternativeName>
        <fullName evidence="1">RNA polymerase subunit beta'</fullName>
    </alternativeName>
    <alternativeName>
        <fullName evidence="1">Transcriptase subunit beta'</fullName>
    </alternativeName>
</protein>
<name>RPOC_CAMJR</name>
<accession>Q5HVY8</accession>
<proteinExistence type="inferred from homology"/>
<sequence length="1517" mass="168837">MSKFKVIEIKEDARPRDFEAFQLRLASPEKIKSWSYGEVKKPETINYRTLKPERDGLFCAKIFGPIRDYECLCGKYKKMRFKGVKCEKCGVEVANSKVRRSRMGHIELVTPVAHIWYVNSLPSRIGTLLGVKMKDLERVLYYEAYIVENPGDAFYDNESTKKVEYCDVLNEEQYQNLMQRYENSGFKARMGGEVVRDLLANLDLVALLNQLKEEMGATNSEAKKKTIIKRLKVVENFLNSNLNANTDSDEAVPNRPEWMMITNLPVLPPDLRPLVALDGGKFAVSDVNDLYRRVINRNTRLKKLMELDAPEIIIRNEKRMLQEAVDALFDNGRRANAVKGANKRPLKSLSEIIKGKQGRFRQNLLGKRVDFSGRSVIVVGPKLRMDQCGLPKKMALELFKPHLLAKLEEKGYATTVKQAKKMIENKTNEVWECLEEVVKGHPVMLNRAPTLHKLSIQAFHPVLVEGKAIQLHPLVCAAFNADFDGDQMAVHVPLSQEAIAECKVLMLSSMNILLPASGKSVTVPSQDMVLGIYYLSLEKAGAKGSHKICTGIDEVMMALESKCLDIHASIQTMVDGRKITTTAGRLIIKSILPDFVPENSWNKVLKKKDIAALVDYVYKQGGLEITASFLDRLKNLGFEYATKAGISISIADIIVPNDKQKAIDEAKKQVREIQNSYNLGLITSGERYNKIIDIWKSTNNVLSKEMMKLVEKDKEGFNSIYMMADSGARGSAAQISQLAAMRGLMTKPDGSIIETPIISNFREGLNVLEYFISTHGARKGLADTALKTANAGYLTRKLIDVAQNVKITIEDCGTHEGVEINEITADSSIIETLEERILGRVLAEDVIDPITNSVLFAEGTLMDEEKAKILGESGIKSVNIRTPITCKAKKGICAKCYGINLGEGKLVKPGEAVGIISAQSIGEPGTQLTLRTFHSGGTASTDLQDRQVSAQKEGFIRFYNLKTYKNKEGKNIVANRRNAAVLLVEPKIKTPFKGVINIENIHEDVIVSIKDKKQEVKYILRKYDLAKPNELAGVSGSIDGKLYLPYQSGMQVEENESIVEVIKEGWNVPNRIPFASEILVEDGEPVVQNIKAGEKGTLKFYILKGDGLDRVKNVKKGDIVKEKGFFVVIADENDREAKRHYIPRESKIEFNDSEKIDDANTIIASAPKKERKVIAEWDAYNNTIIAEIDGVVSFEDIEAGYSADEQIDEATGKRSLVINEYLPSGVRPTLVIAGKGDKAVRYHLEPKTVIFVHDGDKIAQADILAKTPKAAAKSKDITGGLPRVSELFEARKPKNAAVIAEIDGVVRFDKPLRSKERIIIQAEDGTSAEYLIDKSKHIQVRDGEFIHAGEKLTDGVVSSHDVLKILGEKALHYYLISEIQQVYRGQGVVISDKHIEVIVSQMLRQVKVVDSGHTKFIEGDLVSRRKFREENERIIRMGGEPAIAEPVLLGVTRAAIGSDSVISAASFQETTKVLTEASIAGKFDYLEDLKENVILGRMIPVGTGLYGEQNLKLKEQE</sequence>
<comment type="function">
    <text evidence="1">DNA-dependent RNA polymerase catalyzes the transcription of DNA into RNA using the four ribonucleoside triphosphates as substrates.</text>
</comment>
<comment type="catalytic activity">
    <reaction evidence="1">
        <text>RNA(n) + a ribonucleoside 5'-triphosphate = RNA(n+1) + diphosphate</text>
        <dbReference type="Rhea" id="RHEA:21248"/>
        <dbReference type="Rhea" id="RHEA-COMP:14527"/>
        <dbReference type="Rhea" id="RHEA-COMP:17342"/>
        <dbReference type="ChEBI" id="CHEBI:33019"/>
        <dbReference type="ChEBI" id="CHEBI:61557"/>
        <dbReference type="ChEBI" id="CHEBI:140395"/>
        <dbReference type="EC" id="2.7.7.6"/>
    </reaction>
</comment>
<comment type="cofactor">
    <cofactor evidence="1">
        <name>Mg(2+)</name>
        <dbReference type="ChEBI" id="CHEBI:18420"/>
    </cofactor>
    <text evidence="1">Binds 1 Mg(2+) ion per subunit.</text>
</comment>
<comment type="cofactor">
    <cofactor evidence="1">
        <name>Zn(2+)</name>
        <dbReference type="ChEBI" id="CHEBI:29105"/>
    </cofactor>
    <text evidence="1">Binds 2 Zn(2+) ions per subunit.</text>
</comment>
<comment type="subunit">
    <text evidence="1">The RNAP catalytic core consists of 2 alpha, 1 beta, 1 beta' and 1 omega subunit. When a sigma factor is associated with the core the holoenzyme is formed, which can initiate transcription.</text>
</comment>
<comment type="similarity">
    <text evidence="1">Belongs to the RNA polymerase beta' chain family.</text>
</comment>
<gene>
    <name evidence="1" type="primary">rpoC</name>
    <name type="ordered locus">CJE0529</name>
</gene>
<organism>
    <name type="scientific">Campylobacter jejuni (strain RM1221)</name>
    <dbReference type="NCBI Taxonomy" id="195099"/>
    <lineage>
        <taxon>Bacteria</taxon>
        <taxon>Pseudomonadati</taxon>
        <taxon>Campylobacterota</taxon>
        <taxon>Epsilonproteobacteria</taxon>
        <taxon>Campylobacterales</taxon>
        <taxon>Campylobacteraceae</taxon>
        <taxon>Campylobacter</taxon>
    </lineage>
</organism>
<feature type="chain" id="PRO_0000225521" description="DNA-directed RNA polymerase subunit beta'">
    <location>
        <begin position="1"/>
        <end position="1517"/>
    </location>
</feature>
<feature type="binding site" evidence="1">
    <location>
        <position position="71"/>
    </location>
    <ligand>
        <name>Zn(2+)</name>
        <dbReference type="ChEBI" id="CHEBI:29105"/>
        <label>1</label>
    </ligand>
</feature>
<feature type="binding site" evidence="1">
    <location>
        <position position="73"/>
    </location>
    <ligand>
        <name>Zn(2+)</name>
        <dbReference type="ChEBI" id="CHEBI:29105"/>
        <label>1</label>
    </ligand>
</feature>
<feature type="binding site" evidence="1">
    <location>
        <position position="86"/>
    </location>
    <ligand>
        <name>Zn(2+)</name>
        <dbReference type="ChEBI" id="CHEBI:29105"/>
        <label>1</label>
    </ligand>
</feature>
<feature type="binding site" evidence="1">
    <location>
        <position position="89"/>
    </location>
    <ligand>
        <name>Zn(2+)</name>
        <dbReference type="ChEBI" id="CHEBI:29105"/>
        <label>1</label>
    </ligand>
</feature>
<feature type="binding site" evidence="1">
    <location>
        <position position="482"/>
    </location>
    <ligand>
        <name>Mg(2+)</name>
        <dbReference type="ChEBI" id="CHEBI:18420"/>
    </ligand>
</feature>
<feature type="binding site" evidence="1">
    <location>
        <position position="484"/>
    </location>
    <ligand>
        <name>Mg(2+)</name>
        <dbReference type="ChEBI" id="CHEBI:18420"/>
    </ligand>
</feature>
<feature type="binding site" evidence="1">
    <location>
        <position position="486"/>
    </location>
    <ligand>
        <name>Mg(2+)</name>
        <dbReference type="ChEBI" id="CHEBI:18420"/>
    </ligand>
</feature>
<feature type="binding site" evidence="1">
    <location>
        <position position="812"/>
    </location>
    <ligand>
        <name>Zn(2+)</name>
        <dbReference type="ChEBI" id="CHEBI:29105"/>
        <label>2</label>
    </ligand>
</feature>
<feature type="binding site" evidence="1">
    <location>
        <position position="886"/>
    </location>
    <ligand>
        <name>Zn(2+)</name>
        <dbReference type="ChEBI" id="CHEBI:29105"/>
        <label>2</label>
    </ligand>
</feature>
<feature type="binding site" evidence="1">
    <location>
        <position position="893"/>
    </location>
    <ligand>
        <name>Zn(2+)</name>
        <dbReference type="ChEBI" id="CHEBI:29105"/>
        <label>2</label>
    </ligand>
</feature>
<feature type="binding site" evidence="1">
    <location>
        <position position="896"/>
    </location>
    <ligand>
        <name>Zn(2+)</name>
        <dbReference type="ChEBI" id="CHEBI:29105"/>
        <label>2</label>
    </ligand>
</feature>